<sequence length="168" mass="18765">MASVKSFKRKYLKLRKSFDSVVLETEEIEQKIAEISEVYRRILLENAHLNDLLIDMNSTVLPTPPASPPGSPYWEAKPVSHTVFLESPSDVFTLEKPIASTHRWLSKLTALSKSTNSTLSTPKSFHSPLQSRGISPSSAQSSAAVSSSRKQKRKRTSEGPSERRARKK</sequence>
<evidence type="ECO:0000256" key="1">
    <source>
        <dbReference type="SAM" id="MobiDB-lite"/>
    </source>
</evidence>
<evidence type="ECO:0000269" key="2">
    <source>
    </source>
</evidence>
<evidence type="ECO:0000269" key="3">
    <source>
    </source>
</evidence>
<gene>
    <name type="primary">iec3</name>
    <name type="ORF">SPCC1259.04</name>
</gene>
<dbReference type="EMBL" id="CU329672">
    <property type="protein sequence ID" value="CAA22542.1"/>
    <property type="molecule type" value="Genomic_DNA"/>
</dbReference>
<dbReference type="PIR" id="T40893">
    <property type="entry name" value="T40893"/>
</dbReference>
<dbReference type="RefSeq" id="NP_588060.1">
    <property type="nucleotide sequence ID" value="NM_001023052.2"/>
</dbReference>
<dbReference type="SMR" id="O94704"/>
<dbReference type="BioGRID" id="275650">
    <property type="interactions" value="16"/>
</dbReference>
<dbReference type="STRING" id="284812.O94704"/>
<dbReference type="iPTMnet" id="O94704"/>
<dbReference type="PaxDb" id="4896-SPCC1259.04.1"/>
<dbReference type="EnsemblFungi" id="SPCC1259.04.1">
    <property type="protein sequence ID" value="SPCC1259.04.1:pep"/>
    <property type="gene ID" value="SPCC1259.04"/>
</dbReference>
<dbReference type="GeneID" id="2539078"/>
<dbReference type="KEGG" id="spo:2539078"/>
<dbReference type="PomBase" id="SPCC1259.04">
    <property type="gene designation" value="iec3"/>
</dbReference>
<dbReference type="VEuPathDB" id="FungiDB:SPCC1259.04"/>
<dbReference type="HOGENOM" id="CLU_1587460_0_0_1"/>
<dbReference type="InParanoid" id="O94704"/>
<dbReference type="OMA" id="IASTHKW"/>
<dbReference type="PRO" id="PR:O94704"/>
<dbReference type="Proteomes" id="UP000002485">
    <property type="component" value="Chromosome III"/>
</dbReference>
<dbReference type="GO" id="GO:0031011">
    <property type="term" value="C:Ino80 complex"/>
    <property type="evidence" value="ECO:0000314"/>
    <property type="project" value="PomBase"/>
</dbReference>
<dbReference type="GO" id="GO:0005634">
    <property type="term" value="C:nucleus"/>
    <property type="evidence" value="ECO:0007005"/>
    <property type="project" value="PomBase"/>
</dbReference>
<dbReference type="GO" id="GO:0003677">
    <property type="term" value="F:DNA binding"/>
    <property type="evidence" value="ECO:0007669"/>
    <property type="project" value="UniProtKB-KW"/>
</dbReference>
<dbReference type="GO" id="GO:0034080">
    <property type="term" value="P:CENP-A containing chromatin assembly"/>
    <property type="evidence" value="ECO:0000315"/>
    <property type="project" value="PomBase"/>
</dbReference>
<dbReference type="GO" id="GO:0006338">
    <property type="term" value="P:chromatin remodeling"/>
    <property type="evidence" value="ECO:0000314"/>
    <property type="project" value="PomBase"/>
</dbReference>
<dbReference type="GO" id="GO:0006281">
    <property type="term" value="P:DNA repair"/>
    <property type="evidence" value="ECO:0007669"/>
    <property type="project" value="UniProtKB-KW"/>
</dbReference>
<dbReference type="GO" id="GO:0045815">
    <property type="term" value="P:transcription initiation-coupled chromatin remodeling"/>
    <property type="evidence" value="ECO:0000305"/>
    <property type="project" value="PomBase"/>
</dbReference>
<dbReference type="InterPro" id="IPR032742">
    <property type="entry name" value="Iec3_N"/>
</dbReference>
<dbReference type="Pfam" id="PF14612">
    <property type="entry name" value="Ino80_Iec3"/>
    <property type="match status" value="1"/>
</dbReference>
<protein>
    <recommendedName>
        <fullName>INO80 complex subunit 3</fullName>
    </recommendedName>
</protein>
<keyword id="KW-0156">Chromatin regulator</keyword>
<keyword id="KW-0227">DNA damage</keyword>
<keyword id="KW-0234">DNA repair</keyword>
<keyword id="KW-0238">DNA-binding</keyword>
<keyword id="KW-0539">Nucleus</keyword>
<keyword id="KW-1185">Reference proteome</keyword>
<keyword id="KW-0804">Transcription</keyword>
<keyword id="KW-0805">Transcription regulation</keyword>
<proteinExistence type="evidence at protein level"/>
<reference key="1">
    <citation type="journal article" date="2002" name="Nature">
        <title>The genome sequence of Schizosaccharomyces pombe.</title>
        <authorList>
            <person name="Wood V."/>
            <person name="Gwilliam R."/>
            <person name="Rajandream M.A."/>
            <person name="Lyne M.H."/>
            <person name="Lyne R."/>
            <person name="Stewart A."/>
            <person name="Sgouros J.G."/>
            <person name="Peat N."/>
            <person name="Hayles J."/>
            <person name="Baker S.G."/>
            <person name="Basham D."/>
            <person name="Bowman S."/>
            <person name="Brooks K."/>
            <person name="Brown D."/>
            <person name="Brown S."/>
            <person name="Chillingworth T."/>
            <person name="Churcher C.M."/>
            <person name="Collins M."/>
            <person name="Connor R."/>
            <person name="Cronin A."/>
            <person name="Davis P."/>
            <person name="Feltwell T."/>
            <person name="Fraser A."/>
            <person name="Gentles S."/>
            <person name="Goble A."/>
            <person name="Hamlin N."/>
            <person name="Harris D.E."/>
            <person name="Hidalgo J."/>
            <person name="Hodgson G."/>
            <person name="Holroyd S."/>
            <person name="Hornsby T."/>
            <person name="Howarth S."/>
            <person name="Huckle E.J."/>
            <person name="Hunt S."/>
            <person name="Jagels K."/>
            <person name="James K.D."/>
            <person name="Jones L."/>
            <person name="Jones M."/>
            <person name="Leather S."/>
            <person name="McDonald S."/>
            <person name="McLean J."/>
            <person name="Mooney P."/>
            <person name="Moule S."/>
            <person name="Mungall K.L."/>
            <person name="Murphy L.D."/>
            <person name="Niblett D."/>
            <person name="Odell C."/>
            <person name="Oliver K."/>
            <person name="O'Neil S."/>
            <person name="Pearson D."/>
            <person name="Quail M.A."/>
            <person name="Rabbinowitsch E."/>
            <person name="Rutherford K.M."/>
            <person name="Rutter S."/>
            <person name="Saunders D."/>
            <person name="Seeger K."/>
            <person name="Sharp S."/>
            <person name="Skelton J."/>
            <person name="Simmonds M.N."/>
            <person name="Squares R."/>
            <person name="Squares S."/>
            <person name="Stevens K."/>
            <person name="Taylor K."/>
            <person name="Taylor R.G."/>
            <person name="Tivey A."/>
            <person name="Walsh S.V."/>
            <person name="Warren T."/>
            <person name="Whitehead S."/>
            <person name="Woodward J.R."/>
            <person name="Volckaert G."/>
            <person name="Aert R."/>
            <person name="Robben J."/>
            <person name="Grymonprez B."/>
            <person name="Weltjens I."/>
            <person name="Vanstreels E."/>
            <person name="Rieger M."/>
            <person name="Schaefer M."/>
            <person name="Mueller-Auer S."/>
            <person name="Gabel C."/>
            <person name="Fuchs M."/>
            <person name="Duesterhoeft A."/>
            <person name="Fritzc C."/>
            <person name="Holzer E."/>
            <person name="Moestl D."/>
            <person name="Hilbert H."/>
            <person name="Borzym K."/>
            <person name="Langer I."/>
            <person name="Beck A."/>
            <person name="Lehrach H."/>
            <person name="Reinhardt R."/>
            <person name="Pohl T.M."/>
            <person name="Eger P."/>
            <person name="Zimmermann W."/>
            <person name="Wedler H."/>
            <person name="Wambutt R."/>
            <person name="Purnelle B."/>
            <person name="Goffeau A."/>
            <person name="Cadieu E."/>
            <person name="Dreano S."/>
            <person name="Gloux S."/>
            <person name="Lelaure V."/>
            <person name="Mottier S."/>
            <person name="Galibert F."/>
            <person name="Aves S.J."/>
            <person name="Xiang Z."/>
            <person name="Hunt C."/>
            <person name="Moore K."/>
            <person name="Hurst S.M."/>
            <person name="Lucas M."/>
            <person name="Rochet M."/>
            <person name="Gaillardin C."/>
            <person name="Tallada V.A."/>
            <person name="Garzon A."/>
            <person name="Thode G."/>
            <person name="Daga R.R."/>
            <person name="Cruzado L."/>
            <person name="Jimenez J."/>
            <person name="Sanchez M."/>
            <person name="del Rey F."/>
            <person name="Benito J."/>
            <person name="Dominguez A."/>
            <person name="Revuelta J.L."/>
            <person name="Moreno S."/>
            <person name="Armstrong J."/>
            <person name="Forsburg S.L."/>
            <person name="Cerutti L."/>
            <person name="Lowe T."/>
            <person name="McCombie W.R."/>
            <person name="Paulsen I."/>
            <person name="Potashkin J."/>
            <person name="Shpakovski G.V."/>
            <person name="Ussery D."/>
            <person name="Barrell B.G."/>
            <person name="Nurse P."/>
        </authorList>
    </citation>
    <scope>NUCLEOTIDE SEQUENCE [LARGE SCALE GENOMIC DNA]</scope>
    <source>
        <strain>972 / ATCC 24843</strain>
    </source>
</reference>
<reference key="2">
    <citation type="journal article" date="2006" name="Nat. Biotechnol.">
        <title>ORFeome cloning and global analysis of protein localization in the fission yeast Schizosaccharomyces pombe.</title>
        <authorList>
            <person name="Matsuyama A."/>
            <person name="Arai R."/>
            <person name="Yashiroda Y."/>
            <person name="Shirai A."/>
            <person name="Kamata A."/>
            <person name="Sekido S."/>
            <person name="Kobayashi Y."/>
            <person name="Hashimoto A."/>
            <person name="Hamamoto M."/>
            <person name="Hiraoka Y."/>
            <person name="Horinouchi S."/>
            <person name="Yoshida M."/>
        </authorList>
    </citation>
    <scope>SUBCELLULAR LOCATION [LARGE SCALE ANALYSIS]</scope>
</reference>
<reference key="3">
    <citation type="journal article" date="2008" name="Genome Biol.">
        <title>Chromatin Central: towards the comparative proteome by accurate mapping of the yeast proteomic environment.</title>
        <authorList>
            <person name="Shevchenko A."/>
            <person name="Roguev A."/>
            <person name="Schaft D."/>
            <person name="Buchanan L."/>
            <person name="Habermann B."/>
            <person name="Sakalar C."/>
            <person name="Thomas H."/>
            <person name="Krogan N.J."/>
            <person name="Shevchenko A."/>
            <person name="Stewart A.F."/>
        </authorList>
    </citation>
    <scope>IDENTIFICATION IN THE INO80 COMPLEX</scope>
    <scope>IDENTIFICATION BY MASS SPECTROMETRY</scope>
</reference>
<accession>O94704</accession>
<name>IEC3_SCHPO</name>
<organism>
    <name type="scientific">Schizosaccharomyces pombe (strain 972 / ATCC 24843)</name>
    <name type="common">Fission yeast</name>
    <dbReference type="NCBI Taxonomy" id="284812"/>
    <lineage>
        <taxon>Eukaryota</taxon>
        <taxon>Fungi</taxon>
        <taxon>Dikarya</taxon>
        <taxon>Ascomycota</taxon>
        <taxon>Taphrinomycotina</taxon>
        <taxon>Schizosaccharomycetes</taxon>
        <taxon>Schizosaccharomycetales</taxon>
        <taxon>Schizosaccharomycetaceae</taxon>
        <taxon>Schizosaccharomyces</taxon>
    </lineage>
</organism>
<feature type="chain" id="PRO_0000304000" description="INO80 complex subunit 3">
    <location>
        <begin position="1"/>
        <end position="168"/>
    </location>
</feature>
<feature type="region of interest" description="Disordered" evidence="1">
    <location>
        <begin position="115"/>
        <end position="168"/>
    </location>
</feature>
<feature type="compositionally biased region" description="Polar residues" evidence="1">
    <location>
        <begin position="115"/>
        <end position="129"/>
    </location>
</feature>
<feature type="compositionally biased region" description="Low complexity" evidence="1">
    <location>
        <begin position="130"/>
        <end position="148"/>
    </location>
</feature>
<feature type="compositionally biased region" description="Basic and acidic residues" evidence="1">
    <location>
        <begin position="156"/>
        <end position="168"/>
    </location>
</feature>
<comment type="function">
    <text>Component of the INO80 complex which remodels chromatin by shifting nucleosomes and is involved in DNA repair.</text>
</comment>
<comment type="subunit">
    <text evidence="3">Component of the INO80 chromatin remodeling complex.</text>
</comment>
<comment type="subcellular location">
    <subcellularLocation>
        <location evidence="2">Nucleus</location>
    </subcellularLocation>
</comment>